<sequence>MQCAVLLVLLGVVAASPIIPEAARALYYNDGMFEGDIKLRAGRQPARVGAAILGDEYLWSGGVIPYTFAGVSGADQSAILSGMQELEEKTCIRFVPRTTESDYVEIFTSGSGCWSYVGRISGAQQVSLQANGCVYHGTIIHELMHAIGFYHEHTRMDRDNYVTINYQNVDPSMTSNFDIDTYSRYVGEDYQYYSIMHYGKYSFSIQWGVLETIVPLQNGIDLTDPYDKAHMLQTDANQINNLYTNECSLRH</sequence>
<organism>
    <name type="scientific">Astacus astacus</name>
    <name type="common">Noble crayfish</name>
    <name type="synonym">Astacus fluviatilis</name>
    <dbReference type="NCBI Taxonomy" id="6715"/>
    <lineage>
        <taxon>Eukaryota</taxon>
        <taxon>Metazoa</taxon>
        <taxon>Ecdysozoa</taxon>
        <taxon>Arthropoda</taxon>
        <taxon>Crustacea</taxon>
        <taxon>Multicrustacea</taxon>
        <taxon>Malacostraca</taxon>
        <taxon>Eumalacostraca</taxon>
        <taxon>Eucarida</taxon>
        <taxon>Decapoda</taxon>
        <taxon>Pleocyemata</taxon>
        <taxon>Astacidea</taxon>
        <taxon>Astacoidea</taxon>
        <taxon>Astacidae</taxon>
        <taxon>Astacus</taxon>
    </lineage>
</organism>
<feature type="signal peptide" evidence="1">
    <location>
        <begin position="1"/>
        <end position="15"/>
    </location>
</feature>
<feature type="propeptide" id="PRO_0000028872" description="Activation peptide" evidence="5">
    <location>
        <begin position="16"/>
        <end position="49"/>
    </location>
</feature>
<feature type="chain" id="PRO_0000028873" description="Astacin" evidence="6">
    <location>
        <begin position="50"/>
        <end position="249"/>
    </location>
</feature>
<feature type="propeptide" id="PRO_0000028874">
    <location>
        <begin position="250"/>
        <end position="251"/>
    </location>
</feature>
<feature type="domain" description="Peptidase M12A" evidence="2">
    <location>
        <begin position="50"/>
        <end position="248"/>
    </location>
</feature>
<feature type="active site" evidence="2 9">
    <location>
        <position position="142"/>
    </location>
</feature>
<feature type="binding site" evidence="2 3 7">
    <location>
        <position position="141"/>
    </location>
    <ligand>
        <name>Zn(2+)</name>
        <dbReference type="ChEBI" id="CHEBI:29105"/>
        <note>catalytic</note>
    </ligand>
</feature>
<feature type="binding site" evidence="2 3 7">
    <location>
        <position position="145"/>
    </location>
    <ligand>
        <name>Zn(2+)</name>
        <dbReference type="ChEBI" id="CHEBI:29105"/>
        <note>catalytic</note>
    </ligand>
</feature>
<feature type="binding site" evidence="2 3 7">
    <location>
        <position position="151"/>
    </location>
    <ligand>
        <name>Zn(2+)</name>
        <dbReference type="ChEBI" id="CHEBI:29105"/>
        <note>catalytic</note>
    </ligand>
</feature>
<feature type="disulfide bond" evidence="2 3 5 6 7">
    <location>
        <begin position="91"/>
        <end position="247"/>
    </location>
</feature>
<feature type="disulfide bond" evidence="2 3 5 6 7">
    <location>
        <begin position="113"/>
        <end position="133"/>
    </location>
</feature>
<feature type="helix" evidence="11">
    <location>
        <begin position="21"/>
        <end position="27"/>
    </location>
</feature>
<feature type="turn" evidence="11">
    <location>
        <begin position="34"/>
        <end position="36"/>
    </location>
</feature>
<feature type="strand" evidence="11">
    <location>
        <begin position="46"/>
        <end position="48"/>
    </location>
</feature>
<feature type="strand" evidence="11">
    <location>
        <begin position="51"/>
        <end position="53"/>
    </location>
</feature>
<feature type="helix" evidence="11">
    <location>
        <begin position="55"/>
        <end position="57"/>
    </location>
</feature>
<feature type="helix" evidence="11">
    <location>
        <begin position="60"/>
        <end position="62"/>
    </location>
</feature>
<feature type="strand" evidence="11">
    <location>
        <begin position="63"/>
        <end position="70"/>
    </location>
</feature>
<feature type="helix" evidence="11">
    <location>
        <begin position="73"/>
        <end position="89"/>
    </location>
</feature>
<feature type="strand" evidence="11">
    <location>
        <begin position="93"/>
        <end position="96"/>
    </location>
</feature>
<feature type="strand" evidence="11">
    <location>
        <begin position="101"/>
        <end position="118"/>
    </location>
</feature>
<feature type="strand" evidence="11">
    <location>
        <begin position="121"/>
        <end position="128"/>
    </location>
</feature>
<feature type="turn" evidence="11">
    <location>
        <begin position="130"/>
        <end position="133"/>
    </location>
</feature>
<feature type="helix" evidence="11">
    <location>
        <begin position="136"/>
        <end position="147"/>
    </location>
</feature>
<feature type="helix" evidence="11">
    <location>
        <begin position="152"/>
        <end position="154"/>
    </location>
</feature>
<feature type="helix" evidence="11">
    <location>
        <begin position="158"/>
        <end position="160"/>
    </location>
</feature>
<feature type="strand" evidence="11">
    <location>
        <begin position="162"/>
        <end position="164"/>
    </location>
</feature>
<feature type="helix" evidence="11">
    <location>
        <begin position="166"/>
        <end position="168"/>
    </location>
</feature>
<feature type="helix" evidence="11">
    <location>
        <begin position="174"/>
        <end position="177"/>
    </location>
</feature>
<feature type="strand" evidence="10">
    <location>
        <begin position="181"/>
        <end position="184"/>
    </location>
</feature>
<feature type="turn" evidence="11">
    <location>
        <begin position="200"/>
        <end position="203"/>
    </location>
</feature>
<feature type="turn" evidence="11">
    <location>
        <begin position="205"/>
        <end position="209"/>
    </location>
</feature>
<feature type="strand" evidence="11">
    <location>
        <begin position="212"/>
        <end position="217"/>
    </location>
</feature>
<feature type="helix" evidence="11">
    <location>
        <begin position="225"/>
        <end position="227"/>
    </location>
</feature>
<feature type="helix" evidence="11">
    <location>
        <begin position="233"/>
        <end position="242"/>
    </location>
</feature>
<feature type="helix" evidence="11">
    <location>
        <begin position="244"/>
        <end position="249"/>
    </location>
</feature>
<keyword id="KW-0002">3D-structure</keyword>
<keyword id="KW-0903">Direct protein sequencing</keyword>
<keyword id="KW-1015">Disulfide bond</keyword>
<keyword id="KW-0378">Hydrolase</keyword>
<keyword id="KW-0479">Metal-binding</keyword>
<keyword id="KW-0482">Metalloprotease</keyword>
<keyword id="KW-0645">Protease</keyword>
<keyword id="KW-0732">Signal</keyword>
<keyword id="KW-0862">Zinc</keyword>
<keyword id="KW-0865">Zymogen</keyword>
<proteinExistence type="evidence at protein level"/>
<protein>
    <recommendedName>
        <fullName>Astacin</fullName>
        <ecNumber evidence="4 8">3.4.24.21</ecNumber>
    </recommendedName>
    <alternativeName>
        <fullName>Crayfish small molecule proteinase</fullName>
    </alternativeName>
</protein>
<reference key="1">
    <citation type="journal article" date="1997" name="Arch. Biochem. Biophys.">
        <title>Genomic organization of the zinc-endopeptidase astacin.</title>
        <authorList>
            <person name="Geier G."/>
            <person name="Jacob E."/>
            <person name="Stoecker W."/>
            <person name="Zwilling R."/>
        </authorList>
    </citation>
    <scope>NUCLEOTIDE SEQUENCE [GENOMIC DNA]</scope>
</reference>
<reference key="2">
    <citation type="journal article" date="1987" name="Biochemistry">
        <title>Amino acid sequence of a unique protease from the crayfish Astacus fluviatilis.</title>
        <authorList>
            <person name="Titani K."/>
            <person name="Torff H.-J."/>
            <person name="Hormel S."/>
            <person name="Kumar S."/>
            <person name="Walsh K.A."/>
            <person name="Rodl J."/>
            <person name="Neurath H."/>
            <person name="Zwilling R."/>
        </authorList>
    </citation>
    <scope>PROTEIN SEQUENCE OF 50-249</scope>
</reference>
<reference key="3">
    <citation type="journal article" date="1988" name="Biochemistry">
        <title>Astacus protease, a zinc metalloenzyme.</title>
        <authorList>
            <person name="Stoecker W."/>
            <person name="Wolz R.L."/>
            <person name="Zwilling R."/>
            <person name="Strydom D.J."/>
            <person name="Auld D.S."/>
        </authorList>
    </citation>
    <scope>ZINC-BINDING</scope>
    <scope>COFACTOR</scope>
    <scope>CATALYTIC ACTIVITY</scope>
    <scope>FUNCTION</scope>
</reference>
<reference key="4">
    <citation type="journal article" date="1990" name="Biochemistry">
        <title>Fluorescent oligopeptide substrates for kinetic characterization of the specificity of Astacus protease.</title>
        <authorList>
            <person name="Stoecker W."/>
            <person name="Ng M."/>
            <person name="Auld D.S."/>
        </authorList>
    </citation>
    <scope>SUBSTRATE SPECIFICITY</scope>
    <scope>FUNCTION</scope>
    <scope>CATALYTIC ACTIVITY</scope>
</reference>
<reference key="5">
    <citation type="journal article" date="1992" name="Nature">
        <title>Structure of astacin and implications for activation of astacins and zinc-ligation of collagenases.</title>
        <authorList>
            <person name="Bode W."/>
            <person name="Gomis-Rueth F.-X."/>
            <person name="Huber R."/>
            <person name="Zwilling R."/>
            <person name="Stoecker W."/>
        </authorList>
    </citation>
    <scope>X-RAY CRYSTALLOGRAPHY (1.80 ANGSTROMS) OF 50-249 IN COMPLEX WITH ZINC</scope>
    <scope>COFACTOR</scope>
    <scope>DISULFIDE BONDS</scope>
</reference>
<reference key="6">
    <citation type="journal article" date="1993" name="J. Mol. Biol.">
        <title>Refined 1.8 A X-ray crystal structure of astacin, a zinc-endopeptidase from the crayfish Astacus astacus L. Structure determination, refinement, molecular structure and comparison with thermolysin.</title>
        <authorList>
            <person name="Gomis-Rueth F.-X."/>
            <person name="Stoecker W."/>
            <person name="Huber R."/>
            <person name="Zwilling R."/>
            <person name="Bode W."/>
        </authorList>
    </citation>
    <scope>X-RAY CRYSTALLOGRAPHY (1.8 ANGSTROMS) OF 50-249</scope>
    <scope>DISULFIDE BONDS</scope>
</reference>
<reference key="7">
    <citation type="journal article" date="1996" name="Nat. Struct. Biol.">
        <title>Structure of astacin with a transition-state analogue inhibitor.</title>
        <authorList>
            <person name="Grams F."/>
            <person name="Dive V."/>
            <person name="Yiotakis A."/>
            <person name="Yiallouros I."/>
            <person name="Vassiliou S."/>
            <person name="Zwilling R."/>
            <person name="Bode W."/>
            <person name="Stoecker W."/>
        </authorList>
    </citation>
    <scope>X-RAY CRYSTALLOGRAPHY (2.14 ANGSTROMS) OF 50-249 IN COMPLEX WITH ZINC</scope>
    <scope>COFACTOR</scope>
    <scope>DISULFIDE BONDS</scope>
</reference>
<accession>P07584</accession>
<evidence type="ECO:0000255" key="1"/>
<evidence type="ECO:0000255" key="2">
    <source>
        <dbReference type="PROSITE-ProRule" id="PRU01211"/>
    </source>
</evidence>
<evidence type="ECO:0000269" key="3">
    <source>
    </source>
</evidence>
<evidence type="ECO:0000269" key="4">
    <source>
    </source>
</evidence>
<evidence type="ECO:0000269" key="5">
    <source>
    </source>
</evidence>
<evidence type="ECO:0000269" key="6">
    <source>
    </source>
</evidence>
<evidence type="ECO:0000269" key="7">
    <source>
    </source>
</evidence>
<evidence type="ECO:0000269" key="8">
    <source ref="3"/>
</evidence>
<evidence type="ECO:0000305" key="9">
    <source>
    </source>
</evidence>
<evidence type="ECO:0007829" key="10">
    <source>
        <dbReference type="PDB" id="1IAB"/>
    </source>
</evidence>
<evidence type="ECO:0007829" key="11">
    <source>
        <dbReference type="PDB" id="3LQ0"/>
    </source>
</evidence>
<comment type="function">
    <text evidence="4">Metalloprotease. This protease prefers to cleave in front of small aliphatic residues (P1'). The presence of Lys or Arg in the P1 and P2 position yields high-turnover substrates. In the P3 position the enzyme prefers Pro &gt; Val &gt; Leu &gt; Ala &gt; Gly.</text>
</comment>
<comment type="catalytic activity">
    <reaction evidence="4 8">
        <text>Hydrolysis of peptide bonds in substrates containing five or more amino acids, preferentially with Ala in P1', and Pro in P2'.</text>
        <dbReference type="EC" id="3.4.24.21"/>
    </reaction>
</comment>
<comment type="cofactor">
    <cofactor evidence="2 3 7 8">
        <name>Zn(2+)</name>
        <dbReference type="ChEBI" id="CHEBI:29105"/>
    </cofactor>
    <text evidence="2 3 7 8">Binds 1 zinc ion per subunit.</text>
</comment>
<comment type="subunit">
    <text>Monomer.</text>
</comment>
<dbReference type="EC" id="3.4.24.21" evidence="4 8"/>
<dbReference type="EMBL" id="X95684">
    <property type="protein sequence ID" value="CAA64981.1"/>
    <property type="molecule type" value="Genomic_DNA"/>
</dbReference>
<dbReference type="PIR" id="A58830">
    <property type="entry name" value="HYCY"/>
</dbReference>
<dbReference type="PDB" id="1AST">
    <property type="method" value="X-ray"/>
    <property type="resolution" value="1.80 A"/>
    <property type="chains" value="A=50-249"/>
</dbReference>
<dbReference type="PDB" id="1IAA">
    <property type="method" value="X-ray"/>
    <property type="resolution" value="1.90 A"/>
    <property type="chains" value="A=50-249"/>
</dbReference>
<dbReference type="PDB" id="1IAB">
    <property type="method" value="X-ray"/>
    <property type="resolution" value="1.79 A"/>
    <property type="chains" value="A=50-249"/>
</dbReference>
<dbReference type="PDB" id="1IAC">
    <property type="method" value="X-ray"/>
    <property type="resolution" value="2.10 A"/>
    <property type="chains" value="A=50-249"/>
</dbReference>
<dbReference type="PDB" id="1IAD">
    <property type="method" value="X-ray"/>
    <property type="resolution" value="2.30 A"/>
    <property type="chains" value="A=50-249"/>
</dbReference>
<dbReference type="PDB" id="1IAE">
    <property type="method" value="X-ray"/>
    <property type="resolution" value="1.83 A"/>
    <property type="chains" value="A=50-249"/>
</dbReference>
<dbReference type="PDB" id="1QJI">
    <property type="method" value="X-ray"/>
    <property type="resolution" value="2.14 A"/>
    <property type="chains" value="A=50-249"/>
</dbReference>
<dbReference type="PDB" id="1QJJ">
    <property type="method" value="X-ray"/>
    <property type="resolution" value="1.86 A"/>
    <property type="chains" value="A=50-249"/>
</dbReference>
<dbReference type="PDB" id="3LQ0">
    <property type="method" value="X-ray"/>
    <property type="resolution" value="1.45 A"/>
    <property type="chains" value="A=16-250"/>
</dbReference>
<dbReference type="PDB" id="6HT9">
    <property type="method" value="X-ray"/>
    <property type="resolution" value="3.10 A"/>
    <property type="chains" value="A/C=1-251"/>
</dbReference>
<dbReference type="PDB" id="6SAZ">
    <property type="method" value="X-ray"/>
    <property type="resolution" value="3.00 A"/>
    <property type="chains" value="A/C=50-251"/>
</dbReference>
<dbReference type="PDBsum" id="1AST"/>
<dbReference type="PDBsum" id="1IAA"/>
<dbReference type="PDBsum" id="1IAB"/>
<dbReference type="PDBsum" id="1IAC"/>
<dbReference type="PDBsum" id="1IAD"/>
<dbReference type="PDBsum" id="1IAE"/>
<dbReference type="PDBsum" id="1QJI"/>
<dbReference type="PDBsum" id="1QJJ"/>
<dbReference type="PDBsum" id="3LQ0"/>
<dbReference type="PDBsum" id="6HT9"/>
<dbReference type="PDBsum" id="6SAZ"/>
<dbReference type="SMR" id="P07584"/>
<dbReference type="MEROPS" id="M12.001"/>
<dbReference type="KEGG" id="ag:CAA64981"/>
<dbReference type="BRENDA" id="3.4.24.21">
    <property type="organism ID" value="546"/>
</dbReference>
<dbReference type="SABIO-RK" id="P07584"/>
<dbReference type="EvolutionaryTrace" id="P07584"/>
<dbReference type="GO" id="GO:0060473">
    <property type="term" value="C:cortical granule"/>
    <property type="evidence" value="ECO:0000250"/>
    <property type="project" value="UniProtKB"/>
</dbReference>
<dbReference type="GO" id="GO:0005737">
    <property type="term" value="C:cytoplasm"/>
    <property type="evidence" value="ECO:0000250"/>
    <property type="project" value="UniProtKB"/>
</dbReference>
<dbReference type="GO" id="GO:0005886">
    <property type="term" value="C:plasma membrane"/>
    <property type="evidence" value="ECO:0000250"/>
    <property type="project" value="UniProtKB"/>
</dbReference>
<dbReference type="GO" id="GO:0070001">
    <property type="term" value="F:aspartic-type peptidase activity"/>
    <property type="evidence" value="ECO:0000250"/>
    <property type="project" value="UniProtKB"/>
</dbReference>
<dbReference type="GO" id="GO:0070002">
    <property type="term" value="F:glutamic-type peptidase activity"/>
    <property type="evidence" value="ECO:0000250"/>
    <property type="project" value="UniProtKB"/>
</dbReference>
<dbReference type="GO" id="GO:0004222">
    <property type="term" value="F:metalloendopeptidase activity"/>
    <property type="evidence" value="ECO:0007669"/>
    <property type="project" value="UniProtKB-EC"/>
</dbReference>
<dbReference type="GO" id="GO:0008233">
    <property type="term" value="F:peptidase activity"/>
    <property type="evidence" value="ECO:0000250"/>
    <property type="project" value="UniProtKB"/>
</dbReference>
<dbReference type="GO" id="GO:0008270">
    <property type="term" value="F:zinc ion binding"/>
    <property type="evidence" value="ECO:0007669"/>
    <property type="project" value="InterPro"/>
</dbReference>
<dbReference type="GO" id="GO:0007155">
    <property type="term" value="P:cell adhesion"/>
    <property type="evidence" value="ECO:0000250"/>
    <property type="project" value="UniProtKB"/>
</dbReference>
<dbReference type="GO" id="GO:0009566">
    <property type="term" value="P:fertilization"/>
    <property type="evidence" value="ECO:0000250"/>
    <property type="project" value="UniProtKB"/>
</dbReference>
<dbReference type="GO" id="GO:2000360">
    <property type="term" value="P:negative regulation of binding of sperm to zona pellucida"/>
    <property type="evidence" value="ECO:0000250"/>
    <property type="project" value="UniProtKB"/>
</dbReference>
<dbReference type="GO" id="GO:0010954">
    <property type="term" value="P:positive regulation of protein processing"/>
    <property type="evidence" value="ECO:0000250"/>
    <property type="project" value="UniProtKB"/>
</dbReference>
<dbReference type="GO" id="GO:0060468">
    <property type="term" value="P:prevention of polyspermy"/>
    <property type="evidence" value="ECO:0000250"/>
    <property type="project" value="UniProtKB"/>
</dbReference>
<dbReference type="GO" id="GO:0006508">
    <property type="term" value="P:proteolysis"/>
    <property type="evidence" value="ECO:0007669"/>
    <property type="project" value="UniProtKB-KW"/>
</dbReference>
<dbReference type="CDD" id="cd04280">
    <property type="entry name" value="ZnMc_astacin_like"/>
    <property type="match status" value="1"/>
</dbReference>
<dbReference type="FunFam" id="3.40.390.10:FF:000142">
    <property type="entry name" value="Astacin"/>
    <property type="match status" value="1"/>
</dbReference>
<dbReference type="Gene3D" id="3.40.390.10">
    <property type="entry name" value="Collagenase (Catalytic Domain)"/>
    <property type="match status" value="1"/>
</dbReference>
<dbReference type="InterPro" id="IPR034035">
    <property type="entry name" value="Astacin-like_dom"/>
</dbReference>
<dbReference type="InterPro" id="IPR024079">
    <property type="entry name" value="MetalloPept_cat_dom_sf"/>
</dbReference>
<dbReference type="InterPro" id="IPR001506">
    <property type="entry name" value="Peptidase_M12A"/>
</dbReference>
<dbReference type="InterPro" id="IPR006026">
    <property type="entry name" value="Peptidase_Metallo"/>
</dbReference>
<dbReference type="PANTHER" id="PTHR10127">
    <property type="entry name" value="DISCOIDIN, CUB, EGF, LAMININ , AND ZINC METALLOPROTEASE DOMAIN CONTAINING"/>
    <property type="match status" value="1"/>
</dbReference>
<dbReference type="PANTHER" id="PTHR10127:SF883">
    <property type="entry name" value="ZINC METALLOPROTEINASE NAS-8"/>
    <property type="match status" value="1"/>
</dbReference>
<dbReference type="Pfam" id="PF01400">
    <property type="entry name" value="Astacin"/>
    <property type="match status" value="1"/>
</dbReference>
<dbReference type="PRINTS" id="PR00480">
    <property type="entry name" value="ASTACIN"/>
</dbReference>
<dbReference type="SMART" id="SM00235">
    <property type="entry name" value="ZnMc"/>
    <property type="match status" value="1"/>
</dbReference>
<dbReference type="SUPFAM" id="SSF55486">
    <property type="entry name" value="Metalloproteases ('zincins'), catalytic domain"/>
    <property type="match status" value="1"/>
</dbReference>
<dbReference type="PROSITE" id="PS51864">
    <property type="entry name" value="ASTACIN"/>
    <property type="match status" value="1"/>
</dbReference>
<dbReference type="PROSITE" id="PS00142">
    <property type="entry name" value="ZINC_PROTEASE"/>
    <property type="match status" value="1"/>
</dbReference>
<name>ASTA_ASTAS</name>